<gene>
    <name type="ordered locus">Reut_A0143</name>
</gene>
<reference key="1">
    <citation type="journal article" date="2010" name="PLoS ONE">
        <title>The complete multipartite genome sequence of Cupriavidus necator JMP134, a versatile pollutant degrader.</title>
        <authorList>
            <person name="Lykidis A."/>
            <person name="Perez-Pantoja D."/>
            <person name="Ledger T."/>
            <person name="Mavromatis K."/>
            <person name="Anderson I.J."/>
            <person name="Ivanova N.N."/>
            <person name="Hooper S.D."/>
            <person name="Lapidus A."/>
            <person name="Lucas S."/>
            <person name="Gonzalez B."/>
            <person name="Kyrpides N.C."/>
        </authorList>
    </citation>
    <scope>NUCLEOTIDE SEQUENCE [LARGE SCALE GENOMIC DNA]</scope>
    <source>
        <strain>JMP134 / LMG 1197</strain>
    </source>
</reference>
<protein>
    <recommendedName>
        <fullName evidence="1">UPF0225 protein Reut_A0143</fullName>
    </recommendedName>
</protein>
<feature type="chain" id="PRO_1000056734" description="UPF0225 protein Reut_A0143">
    <location>
        <begin position="1"/>
        <end position="143"/>
    </location>
</feature>
<proteinExistence type="inferred from homology"/>
<name>Y143_CUPPJ</name>
<accession>Q477A8</accession>
<organism>
    <name type="scientific">Cupriavidus pinatubonensis (strain JMP 134 / LMG 1197)</name>
    <name type="common">Cupriavidus necator (strain JMP 134)</name>
    <dbReference type="NCBI Taxonomy" id="264198"/>
    <lineage>
        <taxon>Bacteria</taxon>
        <taxon>Pseudomonadati</taxon>
        <taxon>Pseudomonadota</taxon>
        <taxon>Betaproteobacteria</taxon>
        <taxon>Burkholderiales</taxon>
        <taxon>Burkholderiaceae</taxon>
        <taxon>Cupriavidus</taxon>
    </lineage>
</organism>
<comment type="similarity">
    <text evidence="1">Belongs to the UPF0225 family.</text>
</comment>
<sequence>MSARRPPRATPTPCPCGLGAEYDACCGRYHRGDAVPPNAEALMRSRYTAYVMGNMDWVRQTWHPSTCPADLLPDTATRWLGLSVKAHSQQDDTHAEVEFVARYKVGGRAWRLHERSRFVREPRAAGEPPVWLYVDGDMIGEAS</sequence>
<evidence type="ECO:0000255" key="1">
    <source>
        <dbReference type="HAMAP-Rule" id="MF_00612"/>
    </source>
</evidence>
<dbReference type="EMBL" id="CP000090">
    <property type="protein sequence ID" value="AAZ59525.1"/>
    <property type="molecule type" value="Genomic_DNA"/>
</dbReference>
<dbReference type="SMR" id="Q477A8"/>
<dbReference type="STRING" id="264198.Reut_A0143"/>
<dbReference type="KEGG" id="reu:Reut_A0143"/>
<dbReference type="eggNOG" id="COG3012">
    <property type="taxonomic scope" value="Bacteria"/>
</dbReference>
<dbReference type="HOGENOM" id="CLU_099590_2_0_4"/>
<dbReference type="OrthoDB" id="21421at2"/>
<dbReference type="Gene3D" id="3.10.450.50">
    <property type="match status" value="1"/>
</dbReference>
<dbReference type="HAMAP" id="MF_00612">
    <property type="entry name" value="UPF0225"/>
    <property type="match status" value="1"/>
</dbReference>
<dbReference type="InterPro" id="IPR032710">
    <property type="entry name" value="NTF2-like_dom_sf"/>
</dbReference>
<dbReference type="InterPro" id="IPR004027">
    <property type="entry name" value="SEC_C_motif"/>
</dbReference>
<dbReference type="InterPro" id="IPR023006">
    <property type="entry name" value="UPF0225"/>
</dbReference>
<dbReference type="InterPro" id="IPR048469">
    <property type="entry name" value="YchJ-like_M"/>
</dbReference>
<dbReference type="NCBIfam" id="NF002502">
    <property type="entry name" value="PRK01842.1"/>
    <property type="match status" value="1"/>
</dbReference>
<dbReference type="PANTHER" id="PTHR33747:SF1">
    <property type="entry name" value="ADENYLATE CYCLASE-ASSOCIATED CAP C-TERMINAL DOMAIN-CONTAINING PROTEIN"/>
    <property type="match status" value="1"/>
</dbReference>
<dbReference type="PANTHER" id="PTHR33747">
    <property type="entry name" value="UPF0225 PROTEIN SCO1677"/>
    <property type="match status" value="1"/>
</dbReference>
<dbReference type="Pfam" id="PF02810">
    <property type="entry name" value="SEC-C"/>
    <property type="match status" value="1"/>
</dbReference>
<dbReference type="Pfam" id="PF17775">
    <property type="entry name" value="YchJ_M-like"/>
    <property type="match status" value="1"/>
</dbReference>
<dbReference type="SUPFAM" id="SSF54427">
    <property type="entry name" value="NTF2-like"/>
    <property type="match status" value="1"/>
</dbReference>